<proteinExistence type="evidence at protein level"/>
<accession>P0A884</accession>
<accession>P00470</accession>
<accession>Q2MA10</accession>
<evidence type="ECO:0000255" key="1">
    <source>
        <dbReference type="HAMAP-Rule" id="MF_00008"/>
    </source>
</evidence>
<evidence type="ECO:0000269" key="2">
    <source>
    </source>
</evidence>
<evidence type="ECO:0000269" key="3">
    <source>
    </source>
</evidence>
<evidence type="ECO:0000269" key="4">
    <source>
    </source>
</evidence>
<evidence type="ECO:0000269" key="5">
    <source>
    </source>
</evidence>
<evidence type="ECO:0000269" key="6">
    <source>
    </source>
</evidence>
<evidence type="ECO:0000269" key="7">
    <source>
    </source>
</evidence>
<evidence type="ECO:0000303" key="8">
    <source>
    </source>
</evidence>
<evidence type="ECO:0000303" key="9">
    <source>
    </source>
</evidence>
<evidence type="ECO:0000303" key="10">
    <source>
    </source>
</evidence>
<evidence type="ECO:0000303" key="11">
    <source>
    </source>
</evidence>
<evidence type="ECO:0000305" key="12">
    <source>
    </source>
</evidence>
<evidence type="ECO:0007744" key="13">
    <source>
        <dbReference type="PDB" id="1KCE"/>
    </source>
</evidence>
<evidence type="ECO:0007744" key="14">
    <source>
        <dbReference type="PDB" id="1TYS"/>
    </source>
</evidence>
<evidence type="ECO:0007744" key="15">
    <source>
        <dbReference type="PDB" id="2TSC"/>
    </source>
</evidence>
<evidence type="ECO:0007829" key="16">
    <source>
        <dbReference type="PDB" id="1AXW"/>
    </source>
</evidence>
<evidence type="ECO:0007829" key="17">
    <source>
        <dbReference type="PDB" id="1JG0"/>
    </source>
</evidence>
<evidence type="ECO:0007829" key="18">
    <source>
        <dbReference type="PDB" id="2A9W"/>
    </source>
</evidence>
<evidence type="ECO:0007829" key="19">
    <source>
        <dbReference type="PDB" id="2G8X"/>
    </source>
</evidence>
<evidence type="ECO:0007829" key="20">
    <source>
        <dbReference type="PDB" id="6NNR"/>
    </source>
</evidence>
<comment type="function">
    <text evidence="2 3 4 7">Catalyzes the reductive methylation of 2'-deoxyuridine-5'-monophosphate (dUMP) to 2'-deoxythymidine-5'-monophosphate (dTMP) while utilizing 5,10-methylenetetrahydrofolate (mTHF) as the methyl donor and reductant in the reaction, yielding dihydrofolate (DHF) as a by-product (PubMed:2223754, PubMed:3286637, PubMed:9826509). This enzymatic reaction provides an intracellular de novo source of dTMP, an essential precursor for DNA biosynthesis. This protein also binds to its mRNA thus repressing its own translation (PubMed:7708505).</text>
</comment>
<comment type="catalytic activity">
    <reaction evidence="1 2 3 7">
        <text>dUMP + (6R)-5,10-methylene-5,6,7,8-tetrahydrofolate = 7,8-dihydrofolate + dTMP</text>
        <dbReference type="Rhea" id="RHEA:12104"/>
        <dbReference type="ChEBI" id="CHEBI:15636"/>
        <dbReference type="ChEBI" id="CHEBI:57451"/>
        <dbReference type="ChEBI" id="CHEBI:63528"/>
        <dbReference type="ChEBI" id="CHEBI:246422"/>
        <dbReference type="EC" id="2.1.1.45"/>
    </reaction>
</comment>
<comment type="biophysicochemical properties">
    <kinetics>
        <KM evidence="3">50 uM for dUMP</KM>
        <KM evidence="3">25 uM for 5,10-methylenetetrahydrofolate</KM>
        <KM evidence="7">4.1 uM for dUMP</KM>
        <KM evidence="7">13.6 uM for 5,10-methylenetetrahydrofolate</KM>
        <Vmax evidence="3">5.47 umol/min/mg enzyme</Vmax>
        <text evidence="7">kcat is 8.8 sec(-1).</text>
    </kinetics>
</comment>
<comment type="pathway">
    <text evidence="1">Pyrimidine metabolism; dTTP biosynthesis.</text>
</comment>
<comment type="subunit">
    <text evidence="2 5">Homodimer.</text>
</comment>
<comment type="subcellular location">
    <subcellularLocation>
        <location evidence="1">Cytoplasm</location>
    </subcellularLocation>
</comment>
<comment type="PTM">
    <text>Although not discussed in the published references, Met-1 is represented in the submitted PDB entries as being modified by either a formyl, or a carboxyl group. The N-terminal is probably N-(dihydroxymethyl)methionine, the hydrated form of N-formylmethionine.</text>
</comment>
<comment type="similarity">
    <text evidence="1">Belongs to the thymidylate synthase family. Bacterial-type ThyA subfamily.</text>
</comment>
<dbReference type="EC" id="2.1.1.45" evidence="1 2 3 7"/>
<dbReference type="EMBL" id="J01710">
    <property type="protein sequence ID" value="AAA24675.1"/>
    <property type="molecule type" value="Genomic_DNA"/>
</dbReference>
<dbReference type="EMBL" id="U29581">
    <property type="protein sequence ID" value="AAB40474.1"/>
    <property type="molecule type" value="Genomic_DNA"/>
</dbReference>
<dbReference type="EMBL" id="U00096">
    <property type="protein sequence ID" value="AAC75866.1"/>
    <property type="molecule type" value="Genomic_DNA"/>
</dbReference>
<dbReference type="EMBL" id="AP009048">
    <property type="protein sequence ID" value="BAE76896.1"/>
    <property type="molecule type" value="Genomic_DNA"/>
</dbReference>
<dbReference type="EMBL" id="X03966">
    <property type="protein sequence ID" value="CAA27600.1"/>
    <property type="molecule type" value="Genomic_DNA"/>
</dbReference>
<dbReference type="PIR" id="A00549">
    <property type="entry name" value="SYECT"/>
</dbReference>
<dbReference type="RefSeq" id="NP_417304.1">
    <property type="nucleotide sequence ID" value="NC_000913.3"/>
</dbReference>
<dbReference type="RefSeq" id="WP_000816232.1">
    <property type="nucleotide sequence ID" value="NZ_STEB01000034.1"/>
</dbReference>
<dbReference type="PDB" id="1AIQ">
    <property type="method" value="X-ray"/>
    <property type="resolution" value="2.20 A"/>
    <property type="chains" value="A/B=1-264"/>
</dbReference>
<dbReference type="PDB" id="1AJM">
    <property type="method" value="X-ray"/>
    <property type="resolution" value="2.40 A"/>
    <property type="chains" value="A=1-264"/>
</dbReference>
<dbReference type="PDB" id="1AN5">
    <property type="method" value="X-ray"/>
    <property type="resolution" value="2.60 A"/>
    <property type="chains" value="A/B=1-264"/>
</dbReference>
<dbReference type="PDB" id="1AOB">
    <property type="method" value="X-ray"/>
    <property type="resolution" value="2.10 A"/>
    <property type="chains" value="A=1-264"/>
</dbReference>
<dbReference type="PDB" id="1AXW">
    <property type="method" value="X-ray"/>
    <property type="resolution" value="1.70 A"/>
    <property type="chains" value="A/B=1-264"/>
</dbReference>
<dbReference type="PDB" id="1BDU">
    <property type="method" value="X-ray"/>
    <property type="resolution" value="2.10 A"/>
    <property type="chains" value="A=1-264"/>
</dbReference>
<dbReference type="PDB" id="1BID">
    <property type="method" value="X-ray"/>
    <property type="resolution" value="2.20 A"/>
    <property type="chains" value="A=1-264"/>
</dbReference>
<dbReference type="PDB" id="1BJG">
    <property type="method" value="X-ray"/>
    <property type="resolution" value="2.30 A"/>
    <property type="chains" value="A=1-264"/>
</dbReference>
<dbReference type="PDB" id="1BQ1">
    <property type="method" value="X-ray"/>
    <property type="resolution" value="2.50 A"/>
    <property type="chains" value="A/B=1-264"/>
</dbReference>
<dbReference type="PDB" id="1BQ2">
    <property type="method" value="X-ray"/>
    <property type="resolution" value="2.20 A"/>
    <property type="chains" value="A=1-264"/>
</dbReference>
<dbReference type="PDB" id="1DDU">
    <property type="method" value="X-ray"/>
    <property type="resolution" value="2.10 A"/>
    <property type="chains" value="A/B=1-264"/>
</dbReference>
<dbReference type="PDB" id="1DNA">
    <property type="method" value="X-ray"/>
    <property type="resolution" value="2.20 A"/>
    <property type="chains" value="A/B=1-264"/>
</dbReference>
<dbReference type="PDB" id="1EV5">
    <property type="method" value="X-ray"/>
    <property type="resolution" value="1.70 A"/>
    <property type="chains" value="A=1-264"/>
</dbReference>
<dbReference type="PDB" id="1EV8">
    <property type="method" value="X-ray"/>
    <property type="resolution" value="2.60 A"/>
    <property type="chains" value="A=1-264"/>
</dbReference>
<dbReference type="PDB" id="1EVF">
    <property type="method" value="X-ray"/>
    <property type="resolution" value="1.70 A"/>
    <property type="chains" value="A=1-264"/>
</dbReference>
<dbReference type="PDB" id="1EVG">
    <property type="method" value="X-ray"/>
    <property type="resolution" value="2.00 A"/>
    <property type="chains" value="A=1-264"/>
</dbReference>
<dbReference type="PDB" id="1F4B">
    <property type="method" value="X-ray"/>
    <property type="resolution" value="1.75 A"/>
    <property type="chains" value="A=1-264"/>
</dbReference>
<dbReference type="PDB" id="1F4C">
    <property type="method" value="X-ray"/>
    <property type="resolution" value="2.00 A"/>
    <property type="chains" value="A/B=1-264"/>
</dbReference>
<dbReference type="PDB" id="1F4D">
    <property type="method" value="X-ray"/>
    <property type="resolution" value="2.15 A"/>
    <property type="chains" value="A/B=1-264"/>
</dbReference>
<dbReference type="PDB" id="1F4E">
    <property type="method" value="X-ray"/>
    <property type="resolution" value="1.90 A"/>
    <property type="chains" value="A=1-264"/>
</dbReference>
<dbReference type="PDB" id="1F4F">
    <property type="method" value="X-ray"/>
    <property type="resolution" value="2.00 A"/>
    <property type="chains" value="A/B=1-264"/>
</dbReference>
<dbReference type="PDB" id="1F4G">
    <property type="method" value="X-ray"/>
    <property type="resolution" value="1.75 A"/>
    <property type="chains" value="A/B=1-264"/>
</dbReference>
<dbReference type="PDB" id="1FFL">
    <property type="method" value="X-ray"/>
    <property type="resolution" value="2.94 A"/>
    <property type="chains" value="A=1-264"/>
</dbReference>
<dbReference type="PDB" id="1FWM">
    <property type="method" value="X-ray"/>
    <property type="resolution" value="2.20 A"/>
    <property type="chains" value="A/B=1-264"/>
</dbReference>
<dbReference type="PDB" id="1JG0">
    <property type="method" value="X-ray"/>
    <property type="resolution" value="2.00 A"/>
    <property type="chains" value="A/B=1-264"/>
</dbReference>
<dbReference type="PDB" id="1JTQ">
    <property type="method" value="X-ray"/>
    <property type="resolution" value="2.50 A"/>
    <property type="chains" value="A/B=1-264"/>
</dbReference>
<dbReference type="PDB" id="1JTU">
    <property type="method" value="X-ray"/>
    <property type="resolution" value="2.20 A"/>
    <property type="chains" value="A/B=1-264"/>
</dbReference>
<dbReference type="PDB" id="1JUT">
    <property type="method" value="X-ray"/>
    <property type="resolution" value="2.70 A"/>
    <property type="chains" value="A/B=1-264"/>
</dbReference>
<dbReference type="PDB" id="1KCE">
    <property type="method" value="X-ray"/>
    <property type="resolution" value="2.00 A"/>
    <property type="chains" value="A/B=1-264"/>
</dbReference>
<dbReference type="PDB" id="1KZI">
    <property type="method" value="X-ray"/>
    <property type="resolution" value="1.75 A"/>
    <property type="chains" value="A/B=1-264"/>
</dbReference>
<dbReference type="PDB" id="1KZJ">
    <property type="method" value="X-ray"/>
    <property type="resolution" value="2.60 A"/>
    <property type="chains" value="A/B/C/D/E/F=1-264"/>
</dbReference>
<dbReference type="PDB" id="1NCE">
    <property type="method" value="X-ray"/>
    <property type="resolution" value="2.40 A"/>
    <property type="chains" value="A/B=1-264"/>
</dbReference>
<dbReference type="PDB" id="1QQQ">
    <property type="method" value="X-ray"/>
    <property type="resolution" value="1.50 A"/>
    <property type="chains" value="A=1-264"/>
</dbReference>
<dbReference type="PDB" id="1SYN">
    <property type="method" value="X-ray"/>
    <property type="resolution" value="2.00 A"/>
    <property type="chains" value="A/B=1-264"/>
</dbReference>
<dbReference type="PDB" id="1TDU">
    <property type="method" value="X-ray"/>
    <property type="resolution" value="2.10 A"/>
    <property type="chains" value="A/B=1-264"/>
</dbReference>
<dbReference type="PDB" id="1TJS">
    <property type="method" value="X-ray"/>
    <property type="resolution" value="2.20 A"/>
    <property type="chains" value="A=1-264"/>
</dbReference>
<dbReference type="PDB" id="1TLC">
    <property type="method" value="X-ray"/>
    <property type="resolution" value="2.10 A"/>
    <property type="chains" value="A/B=1-264"/>
</dbReference>
<dbReference type="PDB" id="1TLS">
    <property type="method" value="X-ray"/>
    <property type="resolution" value="2.60 A"/>
    <property type="chains" value="A/B=1-264"/>
</dbReference>
<dbReference type="PDB" id="1TRG">
    <property type="method" value="X-ray"/>
    <property type="resolution" value="1.90 A"/>
    <property type="chains" value="A=1-264"/>
</dbReference>
<dbReference type="PDB" id="1TSD">
    <property type="method" value="X-ray"/>
    <property type="resolution" value="1.95 A"/>
    <property type="chains" value="A/B=1-264"/>
</dbReference>
<dbReference type="PDB" id="1TSN">
    <property type="method" value="X-ray"/>
    <property type="resolution" value="2.20 A"/>
    <property type="chains" value="A=1-264"/>
</dbReference>
<dbReference type="PDB" id="1TYS">
    <property type="method" value="X-ray"/>
    <property type="resolution" value="1.80 A"/>
    <property type="chains" value="A=1-264"/>
</dbReference>
<dbReference type="PDB" id="1ZPR">
    <property type="method" value="X-ray"/>
    <property type="resolution" value="2.50 A"/>
    <property type="chains" value="A/B=1-264"/>
</dbReference>
<dbReference type="PDB" id="2A9W">
    <property type="method" value="X-ray"/>
    <property type="resolution" value="1.65 A"/>
    <property type="chains" value="A/B/C/D=1-264"/>
</dbReference>
<dbReference type="PDB" id="2BBQ">
    <property type="method" value="X-ray"/>
    <property type="resolution" value="2.30 A"/>
    <property type="chains" value="A/B=1-264"/>
</dbReference>
<dbReference type="PDB" id="2FTN">
    <property type="method" value="X-ray"/>
    <property type="resolution" value="1.60 A"/>
    <property type="chains" value="A=1-264"/>
</dbReference>
<dbReference type="PDB" id="2FTO">
    <property type="method" value="X-ray"/>
    <property type="resolution" value="2.00 A"/>
    <property type="chains" value="X=1-264"/>
</dbReference>
<dbReference type="PDB" id="2FTQ">
    <property type="method" value="X-ray"/>
    <property type="resolution" value="1.81 A"/>
    <property type="chains" value="A=1-264"/>
</dbReference>
<dbReference type="PDB" id="2G8X">
    <property type="method" value="X-ray"/>
    <property type="resolution" value="1.83 A"/>
    <property type="chains" value="A/B=1-264"/>
</dbReference>
<dbReference type="PDB" id="2KCE">
    <property type="method" value="X-ray"/>
    <property type="resolution" value="2.20 A"/>
    <property type="chains" value="A/B=1-264"/>
</dbReference>
<dbReference type="PDB" id="2TSC">
    <property type="method" value="X-ray"/>
    <property type="resolution" value="1.97 A"/>
    <property type="chains" value="A/B=1-264"/>
</dbReference>
<dbReference type="PDB" id="2VET">
    <property type="method" value="X-ray"/>
    <property type="resolution" value="2.20 A"/>
    <property type="chains" value="A=1-264"/>
</dbReference>
<dbReference type="PDB" id="2VF0">
    <property type="method" value="X-ray"/>
    <property type="resolution" value="3.00 A"/>
    <property type="chains" value="A/B=1-264"/>
</dbReference>
<dbReference type="PDB" id="3B5B">
    <property type="method" value="X-ray"/>
    <property type="resolution" value="2.70 A"/>
    <property type="chains" value="A/B=1-264"/>
</dbReference>
<dbReference type="PDB" id="3B9H">
    <property type="method" value="X-ray"/>
    <property type="resolution" value="2.49 A"/>
    <property type="chains" value="A=1-264"/>
</dbReference>
<dbReference type="PDB" id="3BFI">
    <property type="method" value="X-ray"/>
    <property type="resolution" value="2.20 A"/>
    <property type="chains" value="A=1-264"/>
</dbReference>
<dbReference type="PDB" id="3BGX">
    <property type="method" value="X-ray"/>
    <property type="resolution" value="1.93 A"/>
    <property type="chains" value="A=1-264"/>
</dbReference>
<dbReference type="PDB" id="3BHL">
    <property type="method" value="X-ray"/>
    <property type="resolution" value="1.40 A"/>
    <property type="chains" value="A/B=1-264"/>
</dbReference>
<dbReference type="PDB" id="3BHR">
    <property type="method" value="X-ray"/>
    <property type="resolution" value="1.90 A"/>
    <property type="chains" value="A=1-264"/>
</dbReference>
<dbReference type="PDB" id="3TMS">
    <property type="method" value="X-ray"/>
    <property type="resolution" value="2.10 A"/>
    <property type="chains" value="A=1-264"/>
</dbReference>
<dbReference type="PDB" id="4F2V">
    <property type="method" value="X-ray"/>
    <property type="resolution" value="2.49 A"/>
    <property type="chains" value="A/B=1-264"/>
</dbReference>
<dbReference type="PDB" id="4GEV">
    <property type="method" value="X-ray"/>
    <property type="resolution" value="1.30 A"/>
    <property type="chains" value="A/B=1-264"/>
</dbReference>
<dbReference type="PDB" id="4ISK">
    <property type="method" value="X-ray"/>
    <property type="resolution" value="1.75 A"/>
    <property type="chains" value="A/B/C/D/E/F/G/H=2-264"/>
</dbReference>
<dbReference type="PDB" id="6CDZ">
    <property type="method" value="X-ray"/>
    <property type="resolution" value="2.40 A"/>
    <property type="chains" value="A/B=1-263"/>
</dbReference>
<dbReference type="PDB" id="6NNR">
    <property type="method" value="X-ray"/>
    <property type="resolution" value="1.05 A"/>
    <property type="chains" value="A/B=1-264"/>
</dbReference>
<dbReference type="PDB" id="7JX1">
    <property type="method" value="X-ray"/>
    <property type="resolution" value="1.82 A"/>
    <property type="chains" value="A/B=1-264"/>
</dbReference>
<dbReference type="PDB" id="7JXF">
    <property type="method" value="X-ray"/>
    <property type="resolution" value="1.50 A"/>
    <property type="chains" value="A/B=1-264"/>
</dbReference>
<dbReference type="PDBsum" id="1AIQ"/>
<dbReference type="PDBsum" id="1AJM"/>
<dbReference type="PDBsum" id="1AN5"/>
<dbReference type="PDBsum" id="1AOB"/>
<dbReference type="PDBsum" id="1AXW"/>
<dbReference type="PDBsum" id="1BDU"/>
<dbReference type="PDBsum" id="1BID"/>
<dbReference type="PDBsum" id="1BJG"/>
<dbReference type="PDBsum" id="1BQ1"/>
<dbReference type="PDBsum" id="1BQ2"/>
<dbReference type="PDBsum" id="1DDU"/>
<dbReference type="PDBsum" id="1DNA"/>
<dbReference type="PDBsum" id="1EV5"/>
<dbReference type="PDBsum" id="1EV8"/>
<dbReference type="PDBsum" id="1EVF"/>
<dbReference type="PDBsum" id="1EVG"/>
<dbReference type="PDBsum" id="1F4B"/>
<dbReference type="PDBsum" id="1F4C"/>
<dbReference type="PDBsum" id="1F4D"/>
<dbReference type="PDBsum" id="1F4E"/>
<dbReference type="PDBsum" id="1F4F"/>
<dbReference type="PDBsum" id="1F4G"/>
<dbReference type="PDBsum" id="1FFL"/>
<dbReference type="PDBsum" id="1FWM"/>
<dbReference type="PDBsum" id="1JG0"/>
<dbReference type="PDBsum" id="1JTQ"/>
<dbReference type="PDBsum" id="1JTU"/>
<dbReference type="PDBsum" id="1JUT"/>
<dbReference type="PDBsum" id="1KCE"/>
<dbReference type="PDBsum" id="1KZI"/>
<dbReference type="PDBsum" id="1KZJ"/>
<dbReference type="PDBsum" id="1NCE"/>
<dbReference type="PDBsum" id="1QQQ"/>
<dbReference type="PDBsum" id="1SYN"/>
<dbReference type="PDBsum" id="1TDU"/>
<dbReference type="PDBsum" id="1TJS"/>
<dbReference type="PDBsum" id="1TLC"/>
<dbReference type="PDBsum" id="1TLS"/>
<dbReference type="PDBsum" id="1TRG"/>
<dbReference type="PDBsum" id="1TSD"/>
<dbReference type="PDBsum" id="1TSN"/>
<dbReference type="PDBsum" id="1TYS"/>
<dbReference type="PDBsum" id="1ZPR"/>
<dbReference type="PDBsum" id="2A9W"/>
<dbReference type="PDBsum" id="2BBQ"/>
<dbReference type="PDBsum" id="2FTN"/>
<dbReference type="PDBsum" id="2FTO"/>
<dbReference type="PDBsum" id="2FTQ"/>
<dbReference type="PDBsum" id="2G8X"/>
<dbReference type="PDBsum" id="2KCE"/>
<dbReference type="PDBsum" id="2TSC"/>
<dbReference type="PDBsum" id="2VET"/>
<dbReference type="PDBsum" id="2VF0"/>
<dbReference type="PDBsum" id="3B5B"/>
<dbReference type="PDBsum" id="3B9H"/>
<dbReference type="PDBsum" id="3BFI"/>
<dbReference type="PDBsum" id="3BGX"/>
<dbReference type="PDBsum" id="3BHL"/>
<dbReference type="PDBsum" id="3BHR"/>
<dbReference type="PDBsum" id="3TMS"/>
<dbReference type="PDBsum" id="4F2V"/>
<dbReference type="PDBsum" id="4GEV"/>
<dbReference type="PDBsum" id="4ISK"/>
<dbReference type="PDBsum" id="6CDZ"/>
<dbReference type="PDBsum" id="6NNR"/>
<dbReference type="PDBsum" id="7JX1"/>
<dbReference type="PDBsum" id="7JXF"/>
<dbReference type="SMR" id="P0A884"/>
<dbReference type="BioGRID" id="4262058">
    <property type="interactions" value="222"/>
</dbReference>
<dbReference type="DIP" id="DIP-48261N"/>
<dbReference type="FunCoup" id="P0A884">
    <property type="interactions" value="605"/>
</dbReference>
<dbReference type="IntAct" id="P0A884">
    <property type="interactions" value="5"/>
</dbReference>
<dbReference type="STRING" id="511145.b2827"/>
<dbReference type="BindingDB" id="P0A884"/>
<dbReference type="ChEMBL" id="CHEMBL2555"/>
<dbReference type="DrugBank" id="DB02031">
    <property type="generic name" value="(6S)-5,6,7,8-tetrahydrofolic acid"/>
</dbReference>
<dbReference type="DrugBank" id="DB04447">
    <property type="generic name" value="1,4-Dithiothreitol"/>
</dbReference>
<dbReference type="DrugBank" id="DB03541">
    <property type="generic name" value="10-Propargyl-5,8-Dideazafolic Acid"/>
</dbReference>
<dbReference type="DrugBank" id="DB03274">
    <property type="generic name" value="2',5'-Dideoxyuridine"/>
</dbReference>
<dbReference type="DrugBank" id="DB04457">
    <property type="generic name" value="2'-Deoxyguanosine-5'-Monophosphate"/>
</dbReference>
<dbReference type="DrugBank" id="DB02256">
    <property type="generic name" value="2'-Deoxyuridine"/>
</dbReference>
<dbReference type="DrugBank" id="DB08131">
    <property type="generic name" value="2-{4-[2-(2-AMINO-4-OXO-4,7-DIHYDRO-3H-PYRROLO[2,3-D]PYRIMIDIN-5-YL)-ETHYL]-BENZOYLAMINO}-3-METHYL-BUTYRIC ACID"/>
</dbReference>
<dbReference type="DrugBank" id="DB04696">
    <property type="generic name" value="4-CHLORO-3',3''-DIBROMOPHENOL-1,8-NAPHTHALEIN"/>
</dbReference>
<dbReference type="DrugBank" id="DB02301">
    <property type="generic name" value="5,10-Methylene-6-Hydrofolic Acid"/>
</dbReference>
<dbReference type="DrugBank" id="DB03761">
    <property type="generic name" value="5-fluoro-2'-deoxyuridine-5'-monophosphate"/>
</dbReference>
<dbReference type="DrugBank" id="DB03800">
    <property type="generic name" value="Deoxyuridine monophosphate"/>
</dbReference>
<dbReference type="DrugBank" id="DB02467">
    <property type="generic name" value="L-methionine (S)-S-oxide"/>
</dbReference>
<dbReference type="DrugBank" id="DB02223">
    <property type="generic name" value="LY231514 tetra glu"/>
</dbReference>
<dbReference type="DrugBank" id="DB03038">
    <property type="generic name" value="LY341770"/>
</dbReference>
<dbReference type="DrugBank" id="DB03157">
    <property type="generic name" value="N,O-didansyl-L-tyrosine"/>
</dbReference>
<dbReference type="DrugBank" id="DB03818">
    <property type="generic name" value="N-[Tosyl-D-Prolinyl]Amino-Ethanethiol"/>
</dbReference>
<dbReference type="DrugBank" id="DB02899">
    <property type="generic name" value="N-Carboxymethionine"/>
</dbReference>
<dbReference type="DrugBank" id="DB04586">
    <property type="generic name" value="o-Bromophenol"/>
</dbReference>
<dbReference type="DrugBank" id="DB04530">
    <property type="generic name" value="S,S-(2-Hydroxyethyl)Thiocysteine"/>
</dbReference>
<dbReference type="DrugBank" id="DB04503">
    <property type="generic name" value="Sp-722"/>
</dbReference>
<dbReference type="DrugBank" id="DB03558">
    <property type="generic name" value="SP-876"/>
</dbReference>
<dbReference type="DrugBank" id="DB02752">
    <property type="generic name" value="Tosyl-D-Proline"/>
</dbReference>
<dbReference type="DrugCentral" id="P0A884"/>
<dbReference type="jPOST" id="P0A884"/>
<dbReference type="PaxDb" id="511145-b2827"/>
<dbReference type="EnsemblBacteria" id="AAC75866">
    <property type="protein sequence ID" value="AAC75866"/>
    <property type="gene ID" value="b2827"/>
</dbReference>
<dbReference type="GeneID" id="93779171"/>
<dbReference type="GeneID" id="949035"/>
<dbReference type="KEGG" id="ecj:JW2795"/>
<dbReference type="KEGG" id="eco:b2827"/>
<dbReference type="KEGG" id="ecoc:C3026_15520"/>
<dbReference type="PATRIC" id="fig|1411691.4.peg.3908"/>
<dbReference type="EchoBASE" id="EB0995"/>
<dbReference type="eggNOG" id="COG0207">
    <property type="taxonomic scope" value="Bacteria"/>
</dbReference>
<dbReference type="HOGENOM" id="CLU_021669_0_0_6"/>
<dbReference type="InParanoid" id="P0A884"/>
<dbReference type="OMA" id="AYGRFWR"/>
<dbReference type="OrthoDB" id="9774633at2"/>
<dbReference type="PhylomeDB" id="P0A884"/>
<dbReference type="BioCyc" id="EcoCyc:THYMIDYLATESYN-MONOMER"/>
<dbReference type="BioCyc" id="MetaCyc:THYMIDYLATESYN-MONOMER"/>
<dbReference type="BRENDA" id="2.1.1.45">
    <property type="organism ID" value="2026"/>
</dbReference>
<dbReference type="SABIO-RK" id="P0A884"/>
<dbReference type="UniPathway" id="UPA00575"/>
<dbReference type="EvolutionaryTrace" id="P0A884"/>
<dbReference type="PRO" id="PR:P0A884"/>
<dbReference type="Proteomes" id="UP000000625">
    <property type="component" value="Chromosome"/>
</dbReference>
<dbReference type="GO" id="GO:0005829">
    <property type="term" value="C:cytosol"/>
    <property type="evidence" value="ECO:0000314"/>
    <property type="project" value="EcoCyc"/>
</dbReference>
<dbReference type="GO" id="GO:0000287">
    <property type="term" value="F:magnesium ion binding"/>
    <property type="evidence" value="ECO:0000314"/>
    <property type="project" value="EcoCyc"/>
</dbReference>
<dbReference type="GO" id="GO:0042803">
    <property type="term" value="F:protein homodimerization activity"/>
    <property type="evidence" value="ECO:0000314"/>
    <property type="project" value="EcoCyc"/>
</dbReference>
<dbReference type="GO" id="GO:0003723">
    <property type="term" value="F:RNA binding"/>
    <property type="evidence" value="ECO:0007669"/>
    <property type="project" value="UniProtKB-KW"/>
</dbReference>
<dbReference type="GO" id="GO:0004799">
    <property type="term" value="F:thymidylate synthase activity"/>
    <property type="evidence" value="ECO:0000314"/>
    <property type="project" value="EcoCyc"/>
</dbReference>
<dbReference type="GO" id="GO:0006231">
    <property type="term" value="P:dTMP biosynthetic process"/>
    <property type="evidence" value="ECO:0000314"/>
    <property type="project" value="EcoCyc"/>
</dbReference>
<dbReference type="GO" id="GO:0006235">
    <property type="term" value="P:dTTP biosynthetic process"/>
    <property type="evidence" value="ECO:0007669"/>
    <property type="project" value="UniProtKB-UniRule"/>
</dbReference>
<dbReference type="GO" id="GO:0032259">
    <property type="term" value="P:methylation"/>
    <property type="evidence" value="ECO:0007669"/>
    <property type="project" value="UniProtKB-KW"/>
</dbReference>
<dbReference type="GO" id="GO:0006417">
    <property type="term" value="P:regulation of translation"/>
    <property type="evidence" value="ECO:0007669"/>
    <property type="project" value="UniProtKB-KW"/>
</dbReference>
<dbReference type="GO" id="GO:0009314">
    <property type="term" value="P:response to radiation"/>
    <property type="evidence" value="ECO:0000315"/>
    <property type="project" value="EcoCyc"/>
</dbReference>
<dbReference type="CDD" id="cd00351">
    <property type="entry name" value="TS_Pyrimidine_HMase"/>
    <property type="match status" value="1"/>
</dbReference>
<dbReference type="FunFam" id="3.30.572.10:FF:000001">
    <property type="entry name" value="Thymidylate synthase"/>
    <property type="match status" value="1"/>
</dbReference>
<dbReference type="Gene3D" id="3.30.572.10">
    <property type="entry name" value="Thymidylate synthase/dCMP hydroxymethylase domain"/>
    <property type="match status" value="1"/>
</dbReference>
<dbReference type="HAMAP" id="MF_00008">
    <property type="entry name" value="Thymidy_synth_bact"/>
    <property type="match status" value="1"/>
</dbReference>
<dbReference type="InterPro" id="IPR045097">
    <property type="entry name" value="Thymidate_synth/dCMP_Mease"/>
</dbReference>
<dbReference type="InterPro" id="IPR023451">
    <property type="entry name" value="Thymidate_synth/dCMP_Mease_dom"/>
</dbReference>
<dbReference type="InterPro" id="IPR036926">
    <property type="entry name" value="Thymidate_synth/dCMP_Mease_sf"/>
</dbReference>
<dbReference type="InterPro" id="IPR000398">
    <property type="entry name" value="Thymidylate_synthase"/>
</dbReference>
<dbReference type="InterPro" id="IPR020940">
    <property type="entry name" value="Thymidylate_synthase_AS"/>
</dbReference>
<dbReference type="NCBIfam" id="NF002497">
    <property type="entry name" value="PRK01827.1-3"/>
    <property type="match status" value="1"/>
</dbReference>
<dbReference type="NCBIfam" id="NF002499">
    <property type="entry name" value="PRK01827.1-5"/>
    <property type="match status" value="1"/>
</dbReference>
<dbReference type="NCBIfam" id="TIGR03284">
    <property type="entry name" value="thym_sym"/>
    <property type="match status" value="2"/>
</dbReference>
<dbReference type="PANTHER" id="PTHR11548:SF9">
    <property type="entry name" value="THYMIDYLATE SYNTHASE"/>
    <property type="match status" value="1"/>
</dbReference>
<dbReference type="PANTHER" id="PTHR11548">
    <property type="entry name" value="THYMIDYLATE SYNTHASE 1"/>
    <property type="match status" value="1"/>
</dbReference>
<dbReference type="Pfam" id="PF00303">
    <property type="entry name" value="Thymidylat_synt"/>
    <property type="match status" value="1"/>
</dbReference>
<dbReference type="PRINTS" id="PR00108">
    <property type="entry name" value="THYMDSNTHASE"/>
</dbReference>
<dbReference type="SUPFAM" id="SSF55831">
    <property type="entry name" value="Thymidylate synthase/dCMP hydroxymethylase"/>
    <property type="match status" value="1"/>
</dbReference>
<dbReference type="PROSITE" id="PS00091">
    <property type="entry name" value="THYMIDYLATE_SYNTHASE"/>
    <property type="match status" value="1"/>
</dbReference>
<organism>
    <name type="scientific">Escherichia coli (strain K12)</name>
    <dbReference type="NCBI Taxonomy" id="83333"/>
    <lineage>
        <taxon>Bacteria</taxon>
        <taxon>Pseudomonadati</taxon>
        <taxon>Pseudomonadota</taxon>
        <taxon>Gammaproteobacteria</taxon>
        <taxon>Enterobacterales</taxon>
        <taxon>Enterobacteriaceae</taxon>
        <taxon>Escherichia</taxon>
    </lineage>
</organism>
<name>TYSY_ECOLI</name>
<reference key="1">
    <citation type="journal article" date="1983" name="Proc. Natl. Acad. Sci. U.S.A.">
        <title>Primary structure of the Escherichia coli thyA gene and its thymidylate synthase product.</title>
        <authorList>
            <person name="Belfort M."/>
            <person name="Maley G.F."/>
            <person name="Pedersen-Lane J."/>
            <person name="Maley F."/>
        </authorList>
    </citation>
    <scope>NUCLEOTIDE SEQUENCE [GENOMIC DNA]</scope>
    <scope>PARTIAL PROTEIN SEQUENCE</scope>
    <source>
        <strain>K12 / JM103 / ATCC 39403 / DSM 2829 / KCTC 1112 / NCIMB 12044</strain>
    </source>
</reference>
<reference key="2">
    <citation type="journal article" date="1997" name="Science">
        <title>The complete genome sequence of Escherichia coli K-12.</title>
        <authorList>
            <person name="Blattner F.R."/>
            <person name="Plunkett G. III"/>
            <person name="Bloch C.A."/>
            <person name="Perna N.T."/>
            <person name="Burland V."/>
            <person name="Riley M."/>
            <person name="Collado-Vides J."/>
            <person name="Glasner J.D."/>
            <person name="Rode C.K."/>
            <person name="Mayhew G.F."/>
            <person name="Gregor J."/>
            <person name="Davis N.W."/>
            <person name="Kirkpatrick H.A."/>
            <person name="Goeden M.A."/>
            <person name="Rose D.J."/>
            <person name="Mau B."/>
            <person name="Shao Y."/>
        </authorList>
    </citation>
    <scope>NUCLEOTIDE SEQUENCE [LARGE SCALE GENOMIC DNA]</scope>
    <source>
        <strain>K12 / MG1655 / ATCC 47076</strain>
    </source>
</reference>
<reference key="3">
    <citation type="journal article" date="2006" name="Mol. Syst. Biol.">
        <title>Highly accurate genome sequences of Escherichia coli K-12 strains MG1655 and W3110.</title>
        <authorList>
            <person name="Hayashi K."/>
            <person name="Morooka N."/>
            <person name="Yamamoto Y."/>
            <person name="Fujita K."/>
            <person name="Isono K."/>
            <person name="Choi S."/>
            <person name="Ohtsubo E."/>
            <person name="Baba T."/>
            <person name="Wanner B.L."/>
            <person name="Mori H."/>
            <person name="Horiuchi T."/>
        </authorList>
    </citation>
    <scope>NUCLEOTIDE SEQUENCE [LARGE SCALE GENOMIC DNA]</scope>
    <source>
        <strain>K12 / W3110 / ATCC 27325 / DSM 5911</strain>
    </source>
</reference>
<reference key="4">
    <citation type="journal article" date="1986" name="Nucleic Acids Res.">
        <title>Complete nucleotide sequence of the Escherichia coli recC gene and of the thyA-recC intergenic region.</title>
        <authorList>
            <person name="Finch P.W."/>
            <person name="Wilson R.E."/>
            <person name="Brown K."/>
            <person name="Hickson I.D."/>
            <person name="Tomkinson A.E."/>
            <person name="Emmerson P.T."/>
        </authorList>
    </citation>
    <scope>NUCLEOTIDE SEQUENCE [GENOMIC DNA] OF 63-264</scope>
</reference>
<reference key="5">
    <citation type="journal article" date="1988" name="J. Biol. Chem.">
        <title>Properties of a defined mutant of Escherichia coli thymidylate synthase.</title>
        <authorList>
            <person name="Maley G.F."/>
            <person name="Maley F."/>
        </authorList>
    </citation>
    <scope>FUNCTION</scope>
    <scope>CATALYTIC ACTIVITY</scope>
    <scope>BIOPHYSICOCHEMICAL PROPERTIES</scope>
    <scope>MUTAGENESIS OF CYS-50</scope>
</reference>
<reference key="6">
    <citation type="journal article" date="1992" name="Proteins">
        <title>Amino acid substitution analysis of E. coli thymidylate synthase: the study of a highly conserved region at the N-terminus.</title>
        <authorList>
            <person name="Kim C.W."/>
            <person name="Michaels M.L."/>
            <person name="Miller J.F."/>
        </authorList>
    </citation>
    <scope>MUTAGENESIS</scope>
</reference>
<reference key="7">
    <citation type="journal article" date="1995" name="Nucleic Acids Res.">
        <title>Characterization of a specific interaction between Escherichia coli thymidylate synthase and Escherichia coli thymidylate synthase mRNA.</title>
        <authorList>
            <person name="Voeller D.M."/>
            <person name="Changchien L.-M."/>
            <person name="Maley G.F."/>
            <person name="Maley F."/>
            <person name="Takechi T."/>
            <person name="Turner R.E."/>
            <person name="Montfort W.R."/>
            <person name="Allegra C.J."/>
            <person name="Chu E."/>
        </authorList>
    </citation>
    <scope>FUNCTION</scope>
    <scope>MECHANISM OF TRANSLATION REGULATION</scope>
</reference>
<reference key="8">
    <citation type="journal article" date="1997" name="Electrophoresis">
        <title>Escherichia coli proteome analysis using the gene-protein database.</title>
        <authorList>
            <person name="VanBogelen R.A."/>
            <person name="Abshire K.Z."/>
            <person name="Moldover B."/>
            <person name="Olson E.R."/>
            <person name="Neidhardt F.C."/>
        </authorList>
    </citation>
    <scope>IDENTIFICATION BY 2D-GEL</scope>
</reference>
<reference key="9">
    <citation type="journal article" date="1990" name="Biochemistry">
        <title>Structure, multiple site binding, and segmental accommodation in thymidylate synthase on binding dUMP and an anti-folate.</title>
        <authorList>
            <person name="Montfort W.R."/>
            <person name="Perry K.M."/>
            <person name="Fauman E.B."/>
            <person name="Finer-Moore J.S."/>
            <person name="Maley G.F."/>
            <person name="Hardy L."/>
            <person name="Maley F."/>
            <person name="Stroud R.M."/>
        </authorList>
    </citation>
    <scope>X-RAY CRYSTALLOGRAPHY (1.97 ANGSTROMS) IN COMPLEX WITH DUMP</scope>
    <scope>FUNCTION</scope>
    <scope>CATALYTIC ACTIVITY</scope>
    <scope>ACTIVE SITE</scope>
    <scope>SUBUNIT</scope>
</reference>
<reference key="10">
    <citation type="journal article" date="1990" name="Proteins">
        <title>Plastic adaptation toward mutations in proteins: structural comparison of thymidylate synthases.</title>
        <authorList>
            <person name="Perry K.M."/>
            <person name="Fauman E.B."/>
            <person name="Finer-Moore J.S."/>
            <person name="Montfort W.R."/>
            <person name="Maley G.F."/>
            <person name="Maley F."/>
            <person name="Stroud R.M."/>
        </authorList>
    </citation>
    <scope>X-RAY CRYSTALLOGRAPHY (2.1 ANGSTROMS)</scope>
</reference>
<reference key="11">
    <citation type="journal article" date="1994" name="Biochemistry">
        <title>Water-mediated substrate/product discrimination: the product complex of thymidylate synthase at 1.83 A.</title>
        <authorList>
            <person name="Fauman E.B."/>
            <person name="Rutenber E.E."/>
            <person name="Maley G.F."/>
            <person name="Maley F."/>
            <person name="Stroud R.M."/>
        </authorList>
    </citation>
    <scope>X-RAY CRYSTALLOGRAPHY (1.83 ANGSTROMS) IN COMPLEX WITH DIHYDROFOLATE AND TMP</scope>
</reference>
<reference key="12">
    <citation type="journal article" date="1996" name="Biochemistry">
        <title>An essential role for water in an enzyme reaction mechanism: the crystal structure of the thymidylate synthase mutant E58Q.</title>
        <authorList>
            <person name="Sage C.R."/>
            <person name="Rutenber E.E."/>
            <person name="Stout T.J."/>
            <person name="Stroud R.M."/>
        </authorList>
    </citation>
    <scope>X-RAY CRYSTALLOGRAPHY (2.5 ANGSTROMS) OF MUTANT GLN-58 IN COMPLEX WITH DUMP</scope>
    <scope>ACTIVE SITE</scope>
    <scope>SUBUNIT</scope>
</reference>
<reference key="13">
    <citation type="journal article" date="1997" name="Protein Sci.">
        <title>Crystal structures of a marginally active thymidylate synthase mutant, Arg 126--&gt;Glu.</title>
        <authorList>
            <person name="Strop P."/>
            <person name="Changchien L."/>
            <person name="Maley F."/>
            <person name="Montfort W.R."/>
        </authorList>
    </citation>
    <scope>X-RAY CRYSTALLOGRAPHY (2.4 ANGSTROMS) OF MUTANT GLU-126 IN COMPLEX WITH DUMP</scope>
    <scope>MUTAGENESIS OF ARG-126</scope>
    <scope>REACTION MECHANISM</scope>
    <scope>ACTIVE SITE</scope>
</reference>
<reference key="14">
    <citation type="journal article" date="1998" name="J. Mol. Biol.">
        <title>Inactivity of N229A thymidylate synthase due to water-mediated effects: isolating a late stage in methyl transfer.</title>
        <authorList>
            <person name="Reyes C.L."/>
            <person name="Sage C.R."/>
            <person name="Rutenber E.E."/>
            <person name="Nissen R.M."/>
            <person name="Finer-Moore J.S."/>
            <person name="Stroud R.M."/>
        </authorList>
    </citation>
    <scope>X-RAY CRYSTALLOGRAPHY (2.2 ANGSTROMS) OF MUTANT ALA-177 IN COMPLEX WITH DUMP</scope>
    <scope>FUNCTION</scope>
    <scope>CATALYTIC ACTIVITY</scope>
    <scope>BIOPHYSICOCHEMICAL PROPERTIES</scope>
    <scope>MUTAGENESIS OF ASN-177</scope>
</reference>
<reference key="15">
    <citation type="journal article" date="2000" name="Proc. Natl. Acad. Sci. U.S.A.">
        <title>Site-directed ligand discovery.</title>
        <authorList>
            <person name="Erlanson D.A."/>
            <person name="Braisted A.C."/>
            <person name="Raphael D.R."/>
            <person name="Randal M."/>
            <person name="Stroud R.M."/>
            <person name="Gordon E.M."/>
            <person name="Wells J.A."/>
        </authorList>
    </citation>
    <scope>X-RAY CRYSTALLOGRAPHY (1.75 ANGSTROMS)</scope>
</reference>
<protein>
    <recommendedName>
        <fullName evidence="1 8 9 10">Thymidylate synthase</fullName>
        <shortName evidence="1 8 9 11">TS</shortName>
        <shortName evidence="1">TSase</shortName>
        <ecNumber evidence="1 2 3 7">2.1.1.45</ecNumber>
    </recommendedName>
</protein>
<gene>
    <name evidence="1 10" type="primary">thyA</name>
    <name type="ordered locus">b2827</name>
    <name type="ordered locus">JW2795</name>
</gene>
<sequence length="264" mass="30480">MKQYLELMQKVLDEGTQKNDRTGTGTLSIFGHQMRFNLQDGFPLVTTKRCHLRSIIHELLWFLQGDTNIAYLHENNVTIWDEWADENGDLGPVYGKQWRAWPTPDGRHIDQITTVLNQLKNDPDSRRIIVSAWNVGELDKMALAPCHAFFQFYVADGKLSCQLYQRSCDVFLGLPFNIASYALLVHMMAQQCDLEVGDFVWTGGDTHLYSNHMDQTHLQLSREPRPLPKLIIKRKPESIFDYRFEDFEIEGYDPHPGIKAPVAI</sequence>
<keyword id="KW-0002">3D-structure</keyword>
<keyword id="KW-0963">Cytoplasm</keyword>
<keyword id="KW-0903">Direct protein sequencing</keyword>
<keyword id="KW-0291">Formylation</keyword>
<keyword id="KW-0489">Methyltransferase</keyword>
<keyword id="KW-0545">Nucleotide biosynthesis</keyword>
<keyword id="KW-1185">Reference proteome</keyword>
<keyword id="KW-0678">Repressor</keyword>
<keyword id="KW-0694">RNA-binding</keyword>
<keyword id="KW-0808">Transferase</keyword>
<keyword id="KW-0810">Translation regulation</keyword>
<feature type="chain" id="PRO_0000140954" description="Thymidylate synthase">
    <location>
        <begin position="1"/>
        <end position="264"/>
    </location>
</feature>
<feature type="active site" description="Nucleophile" evidence="1 2 5 6">
    <location>
        <position position="146"/>
    </location>
</feature>
<feature type="binding site" description="in other chain" evidence="2 5 13 15">
    <location>
        <position position="21"/>
    </location>
    <ligand>
        <name>dUMP</name>
        <dbReference type="ChEBI" id="CHEBI:246422"/>
        <note>ligand shared between dimeric partners</note>
    </ligand>
</feature>
<feature type="binding site" evidence="12 14">
    <location>
        <position position="51"/>
    </location>
    <ligand>
        <name>(6R)-5,10-methylene-5,6,7,8-tetrahydrofolate</name>
        <dbReference type="ChEBI" id="CHEBI:15636"/>
    </ligand>
</feature>
<feature type="binding site" evidence="2 5 13 15">
    <location>
        <begin position="126"/>
        <end position="127"/>
    </location>
    <ligand>
        <name>dUMP</name>
        <dbReference type="ChEBI" id="CHEBI:246422"/>
        <note>ligand shared between dimeric partners</note>
    </ligand>
</feature>
<feature type="binding site" description="in other chain" evidence="2 5 13 15">
    <location>
        <begin position="166"/>
        <end position="169"/>
    </location>
    <ligand>
        <name>dUMP</name>
        <dbReference type="ChEBI" id="CHEBI:246422"/>
        <note>ligand shared between dimeric partners</note>
    </ligand>
</feature>
<feature type="binding site" evidence="12 14">
    <location>
        <position position="169"/>
    </location>
    <ligand>
        <name>(6R)-5,10-methylene-5,6,7,8-tetrahydrofolate</name>
        <dbReference type="ChEBI" id="CHEBI:15636"/>
    </ligand>
</feature>
<feature type="binding site" description="in other chain" evidence="2 5 13 15">
    <location>
        <position position="177"/>
    </location>
    <ligand>
        <name>dUMP</name>
        <dbReference type="ChEBI" id="CHEBI:246422"/>
        <note>ligand shared between dimeric partners</note>
    </ligand>
</feature>
<feature type="binding site" description="in other chain" evidence="2 5 13 15">
    <location>
        <begin position="207"/>
        <end position="209"/>
    </location>
    <ligand>
        <name>dUMP</name>
        <dbReference type="ChEBI" id="CHEBI:246422"/>
        <note>ligand shared between dimeric partners</note>
    </ligand>
</feature>
<feature type="binding site" evidence="12 14">
    <location>
        <position position="263"/>
    </location>
    <ligand>
        <name>(6R)-5,10-methylene-5,6,7,8-tetrahydrofolate</name>
        <dbReference type="ChEBI" id="CHEBI:15636"/>
    </ligand>
</feature>
<feature type="mutagenesis site" description="Shows 0.2% of wild-type catalytic activity, but substrate affinity is not affected." evidence="3">
    <original>C</original>
    <variation>Y</variation>
    <location>
        <position position="50"/>
    </location>
</feature>
<feature type="mutagenesis site" description="Shows 2000-fold decrease in catalytic activity and 600-fold decrease in affinity for dUMP." evidence="6">
    <original>R</original>
    <variation>E</variation>
    <location>
        <position position="126"/>
    </location>
</feature>
<feature type="mutagenesis site" description="Shows 200-fold decrease in catalytic activity, 20-fold decrease in affinity for dUMP, and 10-fold decrease in affinity for mTHF." evidence="7">
    <original>N</original>
    <variation>A</variation>
    <location>
        <position position="177"/>
    </location>
</feature>
<feature type="helix" evidence="20">
    <location>
        <begin position="2"/>
        <end position="14"/>
    </location>
</feature>
<feature type="strand" evidence="20">
    <location>
        <begin position="16"/>
        <end position="18"/>
    </location>
</feature>
<feature type="strand" evidence="19">
    <location>
        <begin position="21"/>
        <end position="23"/>
    </location>
</feature>
<feature type="strand" evidence="20">
    <location>
        <begin position="26"/>
        <end position="37"/>
    </location>
</feature>
<feature type="helix" evidence="20">
    <location>
        <begin position="38"/>
        <end position="40"/>
    </location>
</feature>
<feature type="strand" evidence="18">
    <location>
        <begin position="46"/>
        <end position="48"/>
    </location>
</feature>
<feature type="helix" evidence="20">
    <location>
        <begin position="52"/>
        <end position="64"/>
    </location>
</feature>
<feature type="helix" evidence="20">
    <location>
        <begin position="70"/>
        <end position="74"/>
    </location>
</feature>
<feature type="helix" evidence="20">
    <location>
        <begin position="81"/>
        <end position="83"/>
    </location>
</feature>
<feature type="helix" evidence="20">
    <location>
        <begin position="94"/>
        <end position="100"/>
    </location>
</feature>
<feature type="strand" evidence="17">
    <location>
        <begin position="101"/>
        <end position="103"/>
    </location>
</feature>
<feature type="turn" evidence="17">
    <location>
        <begin position="104"/>
        <end position="106"/>
    </location>
</feature>
<feature type="strand" evidence="17">
    <location>
        <begin position="107"/>
        <end position="109"/>
    </location>
</feature>
<feature type="helix" evidence="20">
    <location>
        <begin position="111"/>
        <end position="121"/>
    </location>
</feature>
<feature type="strand" evidence="20">
    <location>
        <begin position="129"/>
        <end position="131"/>
    </location>
</feature>
<feature type="helix" evidence="20">
    <location>
        <begin position="135"/>
        <end position="140"/>
    </location>
</feature>
<feature type="strand" evidence="20">
    <location>
        <begin position="141"/>
        <end position="143"/>
    </location>
</feature>
<feature type="strand" evidence="20">
    <location>
        <begin position="146"/>
        <end position="155"/>
    </location>
</feature>
<feature type="strand" evidence="20">
    <location>
        <begin position="158"/>
        <end position="169"/>
    </location>
</feature>
<feature type="turn" evidence="20">
    <location>
        <begin position="170"/>
        <end position="172"/>
    </location>
</feature>
<feature type="helix" evidence="20">
    <location>
        <begin position="173"/>
        <end position="192"/>
    </location>
</feature>
<feature type="strand" evidence="20">
    <location>
        <begin position="195"/>
        <end position="209"/>
    </location>
</feature>
<feature type="helix" evidence="20">
    <location>
        <begin position="210"/>
        <end position="212"/>
    </location>
</feature>
<feature type="helix" evidence="20">
    <location>
        <begin position="213"/>
        <end position="220"/>
    </location>
</feature>
<feature type="strand" evidence="20">
    <location>
        <begin position="229"/>
        <end position="232"/>
    </location>
</feature>
<feature type="helix" evidence="16">
    <location>
        <begin position="239"/>
        <end position="241"/>
    </location>
</feature>
<feature type="helix" evidence="20">
    <location>
        <begin position="244"/>
        <end position="246"/>
    </location>
</feature>
<feature type="strand" evidence="20">
    <location>
        <begin position="247"/>
        <end position="251"/>
    </location>
</feature>